<accession>Q8FWV8</accession>
<accession>G0KC76</accession>
<dbReference type="EMBL" id="AE014292">
    <property type="protein sequence ID" value="AAN33535.1"/>
    <property type="molecule type" value="Genomic_DNA"/>
</dbReference>
<dbReference type="EMBL" id="CP002998">
    <property type="protein sequence ID" value="AEM19814.1"/>
    <property type="molecule type" value="Genomic_DNA"/>
</dbReference>
<dbReference type="RefSeq" id="WP_004690093.1">
    <property type="nucleotide sequence ID" value="NZ_KN046805.1"/>
</dbReference>
<dbReference type="SMR" id="Q8FWV8"/>
<dbReference type="GeneID" id="55592033"/>
<dbReference type="KEGG" id="bms:BRA0335"/>
<dbReference type="KEGG" id="bsi:BS1330_II0332"/>
<dbReference type="PATRIC" id="fig|204722.21.peg.170"/>
<dbReference type="HOGENOM" id="CLU_018816_2_1_5"/>
<dbReference type="PhylomeDB" id="Q8FWV8"/>
<dbReference type="Proteomes" id="UP000007104">
    <property type="component" value="Chromosome II"/>
</dbReference>
<dbReference type="GO" id="GO:0042597">
    <property type="term" value="C:periplasmic space"/>
    <property type="evidence" value="ECO:0007669"/>
    <property type="project" value="UniProtKB-SubCell"/>
</dbReference>
<dbReference type="GO" id="GO:0005886">
    <property type="term" value="C:plasma membrane"/>
    <property type="evidence" value="ECO:0007669"/>
    <property type="project" value="TreeGrafter"/>
</dbReference>
<dbReference type="GO" id="GO:0022857">
    <property type="term" value="F:transmembrane transporter activity"/>
    <property type="evidence" value="ECO:0007669"/>
    <property type="project" value="InterPro"/>
</dbReference>
<dbReference type="GO" id="GO:0046677">
    <property type="term" value="P:response to antibiotic"/>
    <property type="evidence" value="ECO:0007669"/>
    <property type="project" value="TreeGrafter"/>
</dbReference>
<dbReference type="FunFam" id="2.40.420.20:FF:000001">
    <property type="entry name" value="Efflux RND transporter periplasmic adaptor subunit"/>
    <property type="match status" value="1"/>
</dbReference>
<dbReference type="Gene3D" id="2.40.30.170">
    <property type="match status" value="1"/>
</dbReference>
<dbReference type="Gene3D" id="2.40.420.20">
    <property type="match status" value="1"/>
</dbReference>
<dbReference type="Gene3D" id="2.40.50.100">
    <property type="match status" value="1"/>
</dbReference>
<dbReference type="Gene3D" id="1.10.287.470">
    <property type="entry name" value="Helix hairpin bin"/>
    <property type="match status" value="1"/>
</dbReference>
<dbReference type="InterPro" id="IPR032317">
    <property type="entry name" value="CusB_D23"/>
</dbReference>
<dbReference type="InterPro" id="IPR051160">
    <property type="entry name" value="MFP_Efflux"/>
</dbReference>
<dbReference type="InterPro" id="IPR006143">
    <property type="entry name" value="RND_pump_MFP"/>
</dbReference>
<dbReference type="NCBIfam" id="TIGR01730">
    <property type="entry name" value="RND_mfp"/>
    <property type="match status" value="1"/>
</dbReference>
<dbReference type="PANTHER" id="PTHR30158">
    <property type="entry name" value="ACRA/E-RELATED COMPONENT OF DRUG EFFLUX TRANSPORTER"/>
    <property type="match status" value="1"/>
</dbReference>
<dbReference type="PANTHER" id="PTHR30158:SF3">
    <property type="entry name" value="MULTIDRUG EFFLUX PUMP SUBUNIT ACRA-RELATED"/>
    <property type="match status" value="1"/>
</dbReference>
<dbReference type="Pfam" id="PF16576">
    <property type="entry name" value="HlyD_D23"/>
    <property type="match status" value="1"/>
</dbReference>
<dbReference type="SUPFAM" id="SSF111369">
    <property type="entry name" value="HlyD-like secretion proteins"/>
    <property type="match status" value="1"/>
</dbReference>
<feature type="chain" id="PRO_0000390649" description="Efflux pump periplasmic linker BepF">
    <location>
        <begin position="1"/>
        <end position="411"/>
    </location>
</feature>
<feature type="coiled-coil region" evidence="1">
    <location>
        <begin position="118"/>
        <end position="196"/>
    </location>
</feature>
<organism>
    <name type="scientific">Brucella suis biovar 1 (strain 1330)</name>
    <dbReference type="NCBI Taxonomy" id="204722"/>
    <lineage>
        <taxon>Bacteria</taxon>
        <taxon>Pseudomonadati</taxon>
        <taxon>Pseudomonadota</taxon>
        <taxon>Alphaproteobacteria</taxon>
        <taxon>Hyphomicrobiales</taxon>
        <taxon>Brucellaceae</taxon>
        <taxon>Brucella/Ochrobactrum group</taxon>
        <taxon>Brucella</taxon>
    </lineage>
</organism>
<proteinExistence type="evidence at protein level"/>
<sequence>MVAFWTCRNAWFQHLPFAKRGDENAPSGPRRLRPWFLVLALGLAACSEDKSAPQQAAPLPPIPVGVIKITERPTHPQLSFVGRVEATDSVDLIARVDGFLDKRTFTEGQAVKTGDLLFVLQKDALQAALDAAQANLAKAQADADNLKLQTERARSLYKQKTVSQAMLDDRVAAEKQALAVVQQAQASLEQAQINLGYTDIRAPFSGRIGMANFSVGALVGPSSGPLATIVSQDPIYVTFPVSDKTILDLTEGGRTATDRSNVAVSLTLSNGMTYPQTGAIDFTGIKINPNTDTLMVRAQFPNPNNVLIDGQYVQVTAASKHPVEALLVPQKAIMTDQSGNYVLAVGEDNKVIQRQITQGSTFGSNVVVKSGLAVGDQVVVDGLQRIRPGQKVDPQIVDATTPAQKAMSVGN</sequence>
<comment type="function">
    <text evidence="2">May contribute to resistance to some drugs, such as deoxycholate, sodium dodecyl sulfate and nalidixic acid, in the absence of BepD and BepE.</text>
</comment>
<comment type="subunit">
    <text evidence="2">Probably part of a tripartite efflux pump, which is composed of an outer membrane efflux protein, an inner membrane protein and a protein that expands the periplasmic space. Could form a tripartite pump with BepC and BepG.</text>
</comment>
<comment type="subcellular location">
    <subcellularLocation>
        <location evidence="3">Periplasm</location>
    </subcellularLocation>
</comment>
<comment type="induction">
    <text evidence="2">Induced in the absence of BepD and BepE.</text>
</comment>
<comment type="similarity">
    <text evidence="3">Belongs to the membrane fusion protein (MFP) (TC 8.A.1) family.</text>
</comment>
<evidence type="ECO:0000255" key="1"/>
<evidence type="ECO:0000269" key="2">
    <source>
    </source>
</evidence>
<evidence type="ECO:0000305" key="3"/>
<gene>
    <name type="primary">bepF</name>
    <name type="ordered locus">BRA0335</name>
    <name type="ordered locus">BS1330_II0332</name>
</gene>
<reference key="1">
    <citation type="journal article" date="2002" name="Proc. Natl. Acad. Sci. U.S.A.">
        <title>The Brucella suis genome reveals fundamental similarities between animal and plant pathogens and symbionts.</title>
        <authorList>
            <person name="Paulsen I.T."/>
            <person name="Seshadri R."/>
            <person name="Nelson K.E."/>
            <person name="Eisen J.A."/>
            <person name="Heidelberg J.F."/>
            <person name="Read T.D."/>
            <person name="Dodson R.J."/>
            <person name="Umayam L.A."/>
            <person name="Brinkac L.M."/>
            <person name="Beanan M.J."/>
            <person name="Daugherty S.C."/>
            <person name="DeBoy R.T."/>
            <person name="Durkin A.S."/>
            <person name="Kolonay J.F."/>
            <person name="Madupu R."/>
            <person name="Nelson W.C."/>
            <person name="Ayodeji B."/>
            <person name="Kraul M."/>
            <person name="Shetty J."/>
            <person name="Malek J.A."/>
            <person name="Van Aken S.E."/>
            <person name="Riedmuller S."/>
            <person name="Tettelin H."/>
            <person name="Gill S.R."/>
            <person name="White O."/>
            <person name="Salzberg S.L."/>
            <person name="Hoover D.L."/>
            <person name="Lindler L.E."/>
            <person name="Halling S.M."/>
            <person name="Boyle S.M."/>
            <person name="Fraser C.M."/>
        </authorList>
    </citation>
    <scope>NUCLEOTIDE SEQUENCE [LARGE SCALE GENOMIC DNA]</scope>
    <source>
        <strain>1330</strain>
    </source>
</reference>
<reference key="2">
    <citation type="journal article" date="2011" name="J. Bacteriol.">
        <title>Revised genome sequence of Brucella suis 1330.</title>
        <authorList>
            <person name="Tae H."/>
            <person name="Shallom S."/>
            <person name="Settlage R."/>
            <person name="Preston D."/>
            <person name="Adams L.G."/>
            <person name="Garner H.R."/>
        </authorList>
    </citation>
    <scope>NUCLEOTIDE SEQUENCE [LARGE SCALE GENOMIC DNA]</scope>
    <source>
        <strain>1330</strain>
    </source>
</reference>
<reference key="3">
    <citation type="journal article" date="2009" name="J. Bacteriol.">
        <title>Interplay between two RND systems mediating antimicrobial resistance in Brucella suis.</title>
        <authorList>
            <person name="Martin F.A."/>
            <person name="Posadas D.M."/>
            <person name="Carrica M.C."/>
            <person name="Cravero S.L."/>
            <person name="O'Callaghan D."/>
            <person name="Zorreguieta A."/>
        </authorList>
    </citation>
    <scope>FUNCTION IN RESISTANCE</scope>
    <scope>SUBUNIT</scope>
    <scope>INDUCTION</scope>
    <source>
        <strain>1330</strain>
    </source>
</reference>
<protein>
    <recommendedName>
        <fullName>Efflux pump periplasmic linker BepF</fullName>
    </recommendedName>
</protein>
<keyword id="KW-0175">Coiled coil</keyword>
<keyword id="KW-0574">Periplasm</keyword>
<keyword id="KW-0813">Transport</keyword>
<name>BEPF_BRUSU</name>